<organism>
    <name type="scientific">Escherichia coli O6:H1 (strain CFT073 / ATCC 700928 / UPEC)</name>
    <dbReference type="NCBI Taxonomy" id="199310"/>
    <lineage>
        <taxon>Bacteria</taxon>
        <taxon>Pseudomonadati</taxon>
        <taxon>Pseudomonadota</taxon>
        <taxon>Gammaproteobacteria</taxon>
        <taxon>Enterobacterales</taxon>
        <taxon>Enterobacteriaceae</taxon>
        <taxon>Escherichia</taxon>
    </lineage>
</organism>
<comment type="function">
    <text evidence="1">Catalyzes the oxidative demethylation of N-methyl-L-tryptophan.</text>
</comment>
<comment type="catalytic activity">
    <reaction evidence="1">
        <text>N(alpha)-methyl-L-tryptophan + O2 + H2O = L-tryptophan + formaldehyde + H2O2</text>
        <dbReference type="Rhea" id="RHEA:28006"/>
        <dbReference type="ChEBI" id="CHEBI:15377"/>
        <dbReference type="ChEBI" id="CHEBI:15379"/>
        <dbReference type="ChEBI" id="CHEBI:16240"/>
        <dbReference type="ChEBI" id="CHEBI:16842"/>
        <dbReference type="ChEBI" id="CHEBI:57283"/>
        <dbReference type="ChEBI" id="CHEBI:57912"/>
    </reaction>
</comment>
<comment type="cofactor">
    <cofactor evidence="1">
        <name>FAD</name>
        <dbReference type="ChEBI" id="CHEBI:57692"/>
    </cofactor>
    <text evidence="1">Binds 1 FAD per subunit.</text>
</comment>
<comment type="subunit">
    <text evidence="1">Monomer.</text>
</comment>
<comment type="similarity">
    <text evidence="1">Belongs to the MSOX/MTOX family. MTOX subfamily.</text>
</comment>
<feature type="chain" id="PRO_0000213766" description="N-methyl-L-tryptophan oxidase">
    <location>
        <begin position="1"/>
        <end position="372"/>
    </location>
</feature>
<feature type="binding site" evidence="1">
    <location>
        <begin position="4"/>
        <end position="34"/>
    </location>
    <ligand>
        <name>FAD</name>
        <dbReference type="ChEBI" id="CHEBI:57692"/>
    </ligand>
</feature>
<feature type="modified residue" description="S-8alpha-FAD cysteine" evidence="1">
    <location>
        <position position="308"/>
    </location>
</feature>
<proteinExistence type="inferred from homology"/>
<evidence type="ECO:0000255" key="1">
    <source>
        <dbReference type="HAMAP-Rule" id="MF_00515"/>
    </source>
</evidence>
<accession>Q8FIR3</accession>
<protein>
    <recommendedName>
        <fullName evidence="1">N-methyl-L-tryptophan oxidase</fullName>
        <shortName evidence="1">MTOX</shortName>
        <ecNumber evidence="1">1.5.3.-</ecNumber>
    </recommendedName>
</protein>
<sequence length="372" mass="40930">MKYDLIIIGSGSVGAAAGYYATRAGLNVLMTDAHMPPHQHGSHHGDTRLIRHAYGEGEKYVPLVLRAQMLWDELSRHNEDDPIFVRSGVINLGPADSAFLANVAHSAEQWQLNVEKLDAQGIMARWPEIRVPDNYIGLFETDSGFLRSELAIKTWIQLAKEAGCAQLFNCPVTAIRHDDDGVTIETADGEYQAKKAIVCAGTWVKDLLPELPVQPVRKVFAWYQADGRYSVKNKFPAFTGELPNGDQYYGFPAENDALKIGKHNGGQVIHSADERVPFAEVVSDGSEAFPFLRNVLPGIGCCLYGAACTYDNSPDEDFIIDTLPAHDNTLLITGLSGHGFKFASVLGEIAADFAQDKKSDFDLTPFRLSRFQ</sequence>
<keyword id="KW-0274">FAD</keyword>
<keyword id="KW-0285">Flavoprotein</keyword>
<keyword id="KW-0560">Oxidoreductase</keyword>
<keyword id="KW-1185">Reference proteome</keyword>
<reference key="1">
    <citation type="journal article" date="2002" name="Proc. Natl. Acad. Sci. U.S.A.">
        <title>Extensive mosaic structure revealed by the complete genome sequence of uropathogenic Escherichia coli.</title>
        <authorList>
            <person name="Welch R.A."/>
            <person name="Burland V."/>
            <person name="Plunkett G. III"/>
            <person name="Redford P."/>
            <person name="Roesch P."/>
            <person name="Rasko D."/>
            <person name="Buckles E.L."/>
            <person name="Liou S.-R."/>
            <person name="Boutin A."/>
            <person name="Hackett J."/>
            <person name="Stroud D."/>
            <person name="Mayhew G.F."/>
            <person name="Rose D.J."/>
            <person name="Zhou S."/>
            <person name="Schwartz D.C."/>
            <person name="Perna N.T."/>
            <person name="Mobley H.L.T."/>
            <person name="Donnenberg M.S."/>
            <person name="Blattner F.R."/>
        </authorList>
    </citation>
    <scope>NUCLEOTIDE SEQUENCE [LARGE SCALE GENOMIC DNA]</scope>
    <source>
        <strain>CFT073 / ATCC 700928 / UPEC</strain>
    </source>
</reference>
<dbReference type="EC" id="1.5.3.-" evidence="1"/>
<dbReference type="EMBL" id="AE014075">
    <property type="protein sequence ID" value="AAN79799.1"/>
    <property type="molecule type" value="Genomic_DNA"/>
</dbReference>
<dbReference type="RefSeq" id="WP_000872792.1">
    <property type="nucleotide sequence ID" value="NZ_CP051263.1"/>
</dbReference>
<dbReference type="SMR" id="Q8FIR3"/>
<dbReference type="STRING" id="199310.c1326"/>
<dbReference type="KEGG" id="ecc:c1326"/>
<dbReference type="eggNOG" id="COG0665">
    <property type="taxonomic scope" value="Bacteria"/>
</dbReference>
<dbReference type="HOGENOM" id="CLU_007884_2_1_6"/>
<dbReference type="BioCyc" id="ECOL199310:C1326-MONOMER"/>
<dbReference type="Proteomes" id="UP000001410">
    <property type="component" value="Chromosome"/>
</dbReference>
<dbReference type="GO" id="GO:0005829">
    <property type="term" value="C:cytosol"/>
    <property type="evidence" value="ECO:0007669"/>
    <property type="project" value="TreeGrafter"/>
</dbReference>
<dbReference type="GO" id="GO:0050660">
    <property type="term" value="F:flavin adenine dinucleotide binding"/>
    <property type="evidence" value="ECO:0007669"/>
    <property type="project" value="InterPro"/>
</dbReference>
<dbReference type="GO" id="GO:0050131">
    <property type="term" value="F:N-methyl-L-amino-acid oxidase activity"/>
    <property type="evidence" value="ECO:0007669"/>
    <property type="project" value="InterPro"/>
</dbReference>
<dbReference type="GO" id="GO:0008115">
    <property type="term" value="F:sarcosine oxidase activity"/>
    <property type="evidence" value="ECO:0007669"/>
    <property type="project" value="TreeGrafter"/>
</dbReference>
<dbReference type="Gene3D" id="3.30.9.10">
    <property type="entry name" value="D-Amino Acid Oxidase, subunit A, domain 2"/>
    <property type="match status" value="1"/>
</dbReference>
<dbReference type="Gene3D" id="3.50.50.60">
    <property type="entry name" value="FAD/NAD(P)-binding domain"/>
    <property type="match status" value="1"/>
</dbReference>
<dbReference type="HAMAP" id="MF_00515">
    <property type="entry name" value="MTOX"/>
    <property type="match status" value="1"/>
</dbReference>
<dbReference type="InterPro" id="IPR006076">
    <property type="entry name" value="FAD-dep_OxRdtase"/>
</dbReference>
<dbReference type="InterPro" id="IPR036188">
    <property type="entry name" value="FAD/NAD-bd_sf"/>
</dbReference>
<dbReference type="InterPro" id="IPR023493">
    <property type="entry name" value="Me_Trp_Oxase_MTOX"/>
</dbReference>
<dbReference type="InterPro" id="IPR045170">
    <property type="entry name" value="MTOX"/>
</dbReference>
<dbReference type="NCBIfam" id="NF008425">
    <property type="entry name" value="PRK11259.1"/>
    <property type="match status" value="1"/>
</dbReference>
<dbReference type="PANTHER" id="PTHR10961:SF7">
    <property type="entry name" value="FAD DEPENDENT OXIDOREDUCTASE DOMAIN-CONTAINING PROTEIN"/>
    <property type="match status" value="1"/>
</dbReference>
<dbReference type="PANTHER" id="PTHR10961">
    <property type="entry name" value="PEROXISOMAL SARCOSINE OXIDASE"/>
    <property type="match status" value="1"/>
</dbReference>
<dbReference type="Pfam" id="PF01266">
    <property type="entry name" value="DAO"/>
    <property type="match status" value="1"/>
</dbReference>
<dbReference type="SUPFAM" id="SSF54373">
    <property type="entry name" value="FAD-linked reductases, C-terminal domain"/>
    <property type="match status" value="1"/>
</dbReference>
<dbReference type="SUPFAM" id="SSF51905">
    <property type="entry name" value="FAD/NAD(P)-binding domain"/>
    <property type="match status" value="1"/>
</dbReference>
<gene>
    <name evidence="1" type="primary">solA</name>
    <name type="ordered locus">c1326</name>
</gene>
<name>MTOX_ECOL6</name>